<sequence>MAKTIGLLGKKLGMTRVFADDGSVVPVTVLEVGPCPVMQVKTEEKEGYNAIQIGYDALPERKVNKPAKGHQEKAGKGYFRHLREFPLESVADYELGQEISVDIFAAGEKVKVTGTSKGKGFQGVMKRWNFAGSRASHGAEKVHRSPGSIGHATFPGKVFKGKKMPGQMGNERVTVSNIEIVDVRADENVLVVKGQVPGPKNGLVMIRKTS</sequence>
<keyword id="KW-1185">Reference proteome</keyword>
<keyword id="KW-0687">Ribonucleoprotein</keyword>
<keyword id="KW-0689">Ribosomal protein</keyword>
<keyword id="KW-0694">RNA-binding</keyword>
<keyword id="KW-0699">rRNA-binding</keyword>
<evidence type="ECO:0000255" key="1">
    <source>
        <dbReference type="HAMAP-Rule" id="MF_01325"/>
    </source>
</evidence>
<evidence type="ECO:0000256" key="2">
    <source>
        <dbReference type="SAM" id="MobiDB-lite"/>
    </source>
</evidence>
<evidence type="ECO:0000305" key="3"/>
<feature type="chain" id="PRO_1000214503" description="Large ribosomal subunit protein uL3">
    <location>
        <begin position="1"/>
        <end position="210"/>
    </location>
</feature>
<feature type="region of interest" description="Disordered" evidence="2">
    <location>
        <begin position="139"/>
        <end position="165"/>
    </location>
</feature>
<accession>C6C185</accession>
<reference key="1">
    <citation type="submission" date="2009-06" db="EMBL/GenBank/DDBJ databases">
        <title>Complete sequence of Desulfovibrio salexigens DSM 2638.</title>
        <authorList>
            <consortium name="US DOE Joint Genome Institute"/>
            <person name="Lucas S."/>
            <person name="Copeland A."/>
            <person name="Lapidus A."/>
            <person name="Glavina del Rio T."/>
            <person name="Tice H."/>
            <person name="Bruce D."/>
            <person name="Goodwin L."/>
            <person name="Pitluck S."/>
            <person name="Munk A.C."/>
            <person name="Brettin T."/>
            <person name="Detter J.C."/>
            <person name="Han C."/>
            <person name="Tapia R."/>
            <person name="Larimer F."/>
            <person name="Land M."/>
            <person name="Hauser L."/>
            <person name="Kyrpides N."/>
            <person name="Anderson I."/>
            <person name="Wall J.D."/>
            <person name="Arkin A.P."/>
            <person name="Dehal P."/>
            <person name="Chivian D."/>
            <person name="Giles B."/>
            <person name="Hazen T.C."/>
        </authorList>
    </citation>
    <scope>NUCLEOTIDE SEQUENCE [LARGE SCALE GENOMIC DNA]</scope>
    <source>
        <strain>ATCC 14822 / DSM 2638 / NCIMB 8403 / VKM B-1763</strain>
    </source>
</reference>
<comment type="function">
    <text evidence="1">One of the primary rRNA binding proteins, it binds directly near the 3'-end of the 23S rRNA, where it nucleates assembly of the 50S subunit.</text>
</comment>
<comment type="subunit">
    <text evidence="1">Part of the 50S ribosomal subunit. Forms a cluster with proteins L14 and L19.</text>
</comment>
<comment type="similarity">
    <text evidence="1">Belongs to the universal ribosomal protein uL3 family.</text>
</comment>
<organism>
    <name type="scientific">Maridesulfovibrio salexigens (strain ATCC 14822 / DSM 2638 / NCIMB 8403 / VKM B-1763)</name>
    <name type="common">Desulfovibrio salexigens</name>
    <dbReference type="NCBI Taxonomy" id="526222"/>
    <lineage>
        <taxon>Bacteria</taxon>
        <taxon>Pseudomonadati</taxon>
        <taxon>Thermodesulfobacteriota</taxon>
        <taxon>Desulfovibrionia</taxon>
        <taxon>Desulfovibrionales</taxon>
        <taxon>Desulfovibrionaceae</taxon>
        <taxon>Maridesulfovibrio</taxon>
    </lineage>
</organism>
<protein>
    <recommendedName>
        <fullName evidence="1">Large ribosomal subunit protein uL3</fullName>
    </recommendedName>
    <alternativeName>
        <fullName evidence="3">50S ribosomal protein L3</fullName>
    </alternativeName>
</protein>
<dbReference type="EMBL" id="CP001649">
    <property type="protein sequence ID" value="ACS79248.1"/>
    <property type="molecule type" value="Genomic_DNA"/>
</dbReference>
<dbReference type="RefSeq" id="WP_015851067.1">
    <property type="nucleotide sequence ID" value="NC_012881.1"/>
</dbReference>
<dbReference type="SMR" id="C6C185"/>
<dbReference type="STRING" id="526222.Desal_1185"/>
<dbReference type="KEGG" id="dsa:Desal_1185"/>
<dbReference type="eggNOG" id="COG0087">
    <property type="taxonomic scope" value="Bacteria"/>
</dbReference>
<dbReference type="HOGENOM" id="CLU_044142_4_1_7"/>
<dbReference type="OrthoDB" id="9806135at2"/>
<dbReference type="Proteomes" id="UP000002601">
    <property type="component" value="Chromosome"/>
</dbReference>
<dbReference type="GO" id="GO:0022625">
    <property type="term" value="C:cytosolic large ribosomal subunit"/>
    <property type="evidence" value="ECO:0007669"/>
    <property type="project" value="TreeGrafter"/>
</dbReference>
<dbReference type="GO" id="GO:0019843">
    <property type="term" value="F:rRNA binding"/>
    <property type="evidence" value="ECO:0007669"/>
    <property type="project" value="UniProtKB-UniRule"/>
</dbReference>
<dbReference type="GO" id="GO:0003735">
    <property type="term" value="F:structural constituent of ribosome"/>
    <property type="evidence" value="ECO:0007669"/>
    <property type="project" value="InterPro"/>
</dbReference>
<dbReference type="GO" id="GO:0006412">
    <property type="term" value="P:translation"/>
    <property type="evidence" value="ECO:0007669"/>
    <property type="project" value="UniProtKB-UniRule"/>
</dbReference>
<dbReference type="FunFam" id="2.40.30.10:FF:000004">
    <property type="entry name" value="50S ribosomal protein L3"/>
    <property type="match status" value="1"/>
</dbReference>
<dbReference type="FunFam" id="3.30.160.810:FF:000001">
    <property type="entry name" value="50S ribosomal protein L3"/>
    <property type="match status" value="1"/>
</dbReference>
<dbReference type="Gene3D" id="3.30.160.810">
    <property type="match status" value="1"/>
</dbReference>
<dbReference type="Gene3D" id="2.40.30.10">
    <property type="entry name" value="Translation factors"/>
    <property type="match status" value="1"/>
</dbReference>
<dbReference type="HAMAP" id="MF_01325_B">
    <property type="entry name" value="Ribosomal_uL3_B"/>
    <property type="match status" value="1"/>
</dbReference>
<dbReference type="InterPro" id="IPR000597">
    <property type="entry name" value="Ribosomal_uL3"/>
</dbReference>
<dbReference type="InterPro" id="IPR019927">
    <property type="entry name" value="Ribosomal_uL3_bac/org-type"/>
</dbReference>
<dbReference type="InterPro" id="IPR009000">
    <property type="entry name" value="Transl_B-barrel_sf"/>
</dbReference>
<dbReference type="NCBIfam" id="TIGR03625">
    <property type="entry name" value="L3_bact"/>
    <property type="match status" value="1"/>
</dbReference>
<dbReference type="PANTHER" id="PTHR11229">
    <property type="entry name" value="50S RIBOSOMAL PROTEIN L3"/>
    <property type="match status" value="1"/>
</dbReference>
<dbReference type="PANTHER" id="PTHR11229:SF16">
    <property type="entry name" value="LARGE RIBOSOMAL SUBUNIT PROTEIN UL3C"/>
    <property type="match status" value="1"/>
</dbReference>
<dbReference type="Pfam" id="PF00297">
    <property type="entry name" value="Ribosomal_L3"/>
    <property type="match status" value="1"/>
</dbReference>
<dbReference type="SUPFAM" id="SSF50447">
    <property type="entry name" value="Translation proteins"/>
    <property type="match status" value="1"/>
</dbReference>
<proteinExistence type="inferred from homology"/>
<gene>
    <name evidence="1" type="primary">rplC</name>
    <name type="ordered locus">Desal_1185</name>
</gene>
<name>RL3_MARSD</name>